<comment type="function">
    <text evidence="2">Cell wall formation.</text>
</comment>
<comment type="catalytic activity">
    <reaction evidence="2">
        <text>2 D-alanine + ATP = D-alanyl-D-alanine + ADP + phosphate + H(+)</text>
        <dbReference type="Rhea" id="RHEA:11224"/>
        <dbReference type="ChEBI" id="CHEBI:15378"/>
        <dbReference type="ChEBI" id="CHEBI:30616"/>
        <dbReference type="ChEBI" id="CHEBI:43474"/>
        <dbReference type="ChEBI" id="CHEBI:57416"/>
        <dbReference type="ChEBI" id="CHEBI:57822"/>
        <dbReference type="ChEBI" id="CHEBI:456216"/>
        <dbReference type="EC" id="6.3.2.4"/>
    </reaction>
</comment>
<comment type="cofactor">
    <cofactor evidence="1">
        <name>Mg(2+)</name>
        <dbReference type="ChEBI" id="CHEBI:18420"/>
    </cofactor>
    <cofactor evidence="1">
        <name>Mn(2+)</name>
        <dbReference type="ChEBI" id="CHEBI:29035"/>
    </cofactor>
    <text evidence="1">Binds 2 magnesium or manganese ions per subunit.</text>
</comment>
<comment type="pathway">
    <text evidence="2">Cell wall biogenesis; peptidoglycan biosynthesis.</text>
</comment>
<comment type="subcellular location">
    <subcellularLocation>
        <location evidence="2">Cytoplasm</location>
    </subcellularLocation>
</comment>
<comment type="similarity">
    <text evidence="2">Belongs to the D-alanine--D-alanine ligase family.</text>
</comment>
<name>DDL_LEPBL</name>
<evidence type="ECO:0000250" key="1"/>
<evidence type="ECO:0000255" key="2">
    <source>
        <dbReference type="HAMAP-Rule" id="MF_00047"/>
    </source>
</evidence>
<accession>Q052B5</accession>
<protein>
    <recommendedName>
        <fullName evidence="2">D-alanine--D-alanine ligase</fullName>
        <ecNumber evidence="2">6.3.2.4</ecNumber>
    </recommendedName>
    <alternativeName>
        <fullName evidence="2">D-Ala-D-Ala ligase</fullName>
    </alternativeName>
    <alternativeName>
        <fullName evidence="2">D-alanylalanine synthetase</fullName>
    </alternativeName>
</protein>
<dbReference type="EC" id="6.3.2.4" evidence="2"/>
<dbReference type="EMBL" id="CP000348">
    <property type="protein sequence ID" value="ABJ78830.1"/>
    <property type="molecule type" value="Genomic_DNA"/>
</dbReference>
<dbReference type="RefSeq" id="WP_002721946.1">
    <property type="nucleotide sequence ID" value="NC_008508.1"/>
</dbReference>
<dbReference type="SMR" id="Q052B5"/>
<dbReference type="KEGG" id="lbl:LBL_1338"/>
<dbReference type="HOGENOM" id="CLU_039268_1_1_12"/>
<dbReference type="UniPathway" id="UPA00219"/>
<dbReference type="GO" id="GO:0005737">
    <property type="term" value="C:cytoplasm"/>
    <property type="evidence" value="ECO:0007669"/>
    <property type="project" value="UniProtKB-SubCell"/>
</dbReference>
<dbReference type="GO" id="GO:0005524">
    <property type="term" value="F:ATP binding"/>
    <property type="evidence" value="ECO:0007669"/>
    <property type="project" value="UniProtKB-KW"/>
</dbReference>
<dbReference type="GO" id="GO:0008716">
    <property type="term" value="F:D-alanine-D-alanine ligase activity"/>
    <property type="evidence" value="ECO:0007669"/>
    <property type="project" value="UniProtKB-UniRule"/>
</dbReference>
<dbReference type="GO" id="GO:0046872">
    <property type="term" value="F:metal ion binding"/>
    <property type="evidence" value="ECO:0007669"/>
    <property type="project" value="UniProtKB-KW"/>
</dbReference>
<dbReference type="GO" id="GO:0071555">
    <property type="term" value="P:cell wall organization"/>
    <property type="evidence" value="ECO:0007669"/>
    <property type="project" value="UniProtKB-KW"/>
</dbReference>
<dbReference type="GO" id="GO:0009252">
    <property type="term" value="P:peptidoglycan biosynthetic process"/>
    <property type="evidence" value="ECO:0007669"/>
    <property type="project" value="UniProtKB-UniRule"/>
</dbReference>
<dbReference type="GO" id="GO:0008360">
    <property type="term" value="P:regulation of cell shape"/>
    <property type="evidence" value="ECO:0007669"/>
    <property type="project" value="UniProtKB-KW"/>
</dbReference>
<dbReference type="Gene3D" id="3.40.50.20">
    <property type="match status" value="1"/>
</dbReference>
<dbReference type="Gene3D" id="3.30.1490.20">
    <property type="entry name" value="ATP-grasp fold, A domain"/>
    <property type="match status" value="1"/>
</dbReference>
<dbReference type="Gene3D" id="3.30.470.20">
    <property type="entry name" value="ATP-grasp fold, B domain"/>
    <property type="match status" value="1"/>
</dbReference>
<dbReference type="HAMAP" id="MF_00047">
    <property type="entry name" value="Dala_Dala_lig"/>
    <property type="match status" value="1"/>
</dbReference>
<dbReference type="InterPro" id="IPR011761">
    <property type="entry name" value="ATP-grasp"/>
</dbReference>
<dbReference type="InterPro" id="IPR013815">
    <property type="entry name" value="ATP_grasp_subdomain_1"/>
</dbReference>
<dbReference type="InterPro" id="IPR000291">
    <property type="entry name" value="D-Ala_lig_Van_CS"/>
</dbReference>
<dbReference type="InterPro" id="IPR005905">
    <property type="entry name" value="D_ala_D_ala"/>
</dbReference>
<dbReference type="InterPro" id="IPR011095">
    <property type="entry name" value="Dala_Dala_lig_C"/>
</dbReference>
<dbReference type="InterPro" id="IPR011127">
    <property type="entry name" value="Dala_Dala_lig_N"/>
</dbReference>
<dbReference type="InterPro" id="IPR016185">
    <property type="entry name" value="PreATP-grasp_dom_sf"/>
</dbReference>
<dbReference type="NCBIfam" id="TIGR01205">
    <property type="entry name" value="D_ala_D_alaTIGR"/>
    <property type="match status" value="1"/>
</dbReference>
<dbReference type="NCBIfam" id="NF002378">
    <property type="entry name" value="PRK01372.1"/>
    <property type="match status" value="1"/>
</dbReference>
<dbReference type="NCBIfam" id="NF011170">
    <property type="entry name" value="PRK14572.1"/>
    <property type="match status" value="1"/>
</dbReference>
<dbReference type="PANTHER" id="PTHR23132">
    <property type="entry name" value="D-ALANINE--D-ALANINE LIGASE"/>
    <property type="match status" value="1"/>
</dbReference>
<dbReference type="PANTHER" id="PTHR23132:SF23">
    <property type="entry name" value="D-ALANINE--D-ALANINE LIGASE B"/>
    <property type="match status" value="1"/>
</dbReference>
<dbReference type="Pfam" id="PF07478">
    <property type="entry name" value="Dala_Dala_lig_C"/>
    <property type="match status" value="1"/>
</dbReference>
<dbReference type="Pfam" id="PF01820">
    <property type="entry name" value="Dala_Dala_lig_N"/>
    <property type="match status" value="1"/>
</dbReference>
<dbReference type="PIRSF" id="PIRSF039102">
    <property type="entry name" value="Ddl/VanB"/>
    <property type="match status" value="1"/>
</dbReference>
<dbReference type="SUPFAM" id="SSF56059">
    <property type="entry name" value="Glutathione synthetase ATP-binding domain-like"/>
    <property type="match status" value="1"/>
</dbReference>
<dbReference type="SUPFAM" id="SSF52440">
    <property type="entry name" value="PreATP-grasp domain"/>
    <property type="match status" value="1"/>
</dbReference>
<dbReference type="PROSITE" id="PS50975">
    <property type="entry name" value="ATP_GRASP"/>
    <property type="match status" value="1"/>
</dbReference>
<dbReference type="PROSITE" id="PS00843">
    <property type="entry name" value="DALA_DALA_LIGASE_1"/>
    <property type="match status" value="1"/>
</dbReference>
<dbReference type="PROSITE" id="PS00844">
    <property type="entry name" value="DALA_DALA_LIGASE_2"/>
    <property type="match status" value="1"/>
</dbReference>
<gene>
    <name evidence="2" type="primary">ddl</name>
    <name type="ordered locus">LBL_1338</name>
</gene>
<reference key="1">
    <citation type="journal article" date="2006" name="Proc. Natl. Acad. Sci. U.S.A.">
        <title>Genome reduction in Leptospira borgpetersenii reflects limited transmission potential.</title>
        <authorList>
            <person name="Bulach D.M."/>
            <person name="Zuerner R.L."/>
            <person name="Wilson P."/>
            <person name="Seemann T."/>
            <person name="McGrath A."/>
            <person name="Cullen P.A."/>
            <person name="Davis J."/>
            <person name="Johnson M."/>
            <person name="Kuczek E."/>
            <person name="Alt D.P."/>
            <person name="Peterson-Burch B."/>
            <person name="Coppel R.L."/>
            <person name="Rood J.I."/>
            <person name="Davies J.K."/>
            <person name="Adler B."/>
        </authorList>
    </citation>
    <scope>NUCLEOTIDE SEQUENCE [LARGE SCALE GENOMIC DNA]</scope>
    <source>
        <strain>L550</strain>
    </source>
</reference>
<sequence length="351" mass="38303">MAKIAVFFGGSSTEHSISIRTGCFICRTLHTMGHSVKPILLTQDGGWVVPLQYRISIPYEAVNSSDLFEEEFQKTNGVSKMDFISNLDADIVFLGLHGGKGEDGSIQGFLRVLGVPYTGSGVAASALAMDKTRANQIFLQSGQKVAPFFEVEKLGYTNSPEETVIKLMSLGFPQFLKPVEGGSSVSTYKITNQEQLSRQLALIFESDSKVMSQSFLAGTEVSCGVLERYRNGKLERIALPATEIVPGGEFFDFESKYKQGGSREITPARISKQEMTRVQELAIDAHTSLGCRGYSRSDFIIVGGEPHILETNTLPGMTETSLIPQQAKAAGITMEEVFADLIEIGLKHSIH</sequence>
<feature type="chain" id="PRO_1000030462" description="D-alanine--D-alanine ligase">
    <location>
        <begin position="1"/>
        <end position="351"/>
    </location>
</feature>
<feature type="domain" description="ATP-grasp" evidence="2">
    <location>
        <begin position="135"/>
        <end position="343"/>
    </location>
</feature>
<feature type="binding site" evidence="2">
    <location>
        <begin position="167"/>
        <end position="222"/>
    </location>
    <ligand>
        <name>ATP</name>
        <dbReference type="ChEBI" id="CHEBI:30616"/>
    </ligand>
</feature>
<feature type="binding site" evidence="2">
    <location>
        <position position="298"/>
    </location>
    <ligand>
        <name>Mg(2+)</name>
        <dbReference type="ChEBI" id="CHEBI:18420"/>
        <label>1</label>
    </ligand>
</feature>
<feature type="binding site" evidence="2">
    <location>
        <position position="310"/>
    </location>
    <ligand>
        <name>Mg(2+)</name>
        <dbReference type="ChEBI" id="CHEBI:18420"/>
        <label>1</label>
    </ligand>
</feature>
<feature type="binding site" evidence="2">
    <location>
        <position position="310"/>
    </location>
    <ligand>
        <name>Mg(2+)</name>
        <dbReference type="ChEBI" id="CHEBI:18420"/>
        <label>2</label>
    </ligand>
</feature>
<feature type="binding site" evidence="2">
    <location>
        <position position="312"/>
    </location>
    <ligand>
        <name>Mg(2+)</name>
        <dbReference type="ChEBI" id="CHEBI:18420"/>
        <label>2</label>
    </ligand>
</feature>
<organism>
    <name type="scientific">Leptospira borgpetersenii serovar Hardjo-bovis (strain L550)</name>
    <dbReference type="NCBI Taxonomy" id="355276"/>
    <lineage>
        <taxon>Bacteria</taxon>
        <taxon>Pseudomonadati</taxon>
        <taxon>Spirochaetota</taxon>
        <taxon>Spirochaetia</taxon>
        <taxon>Leptospirales</taxon>
        <taxon>Leptospiraceae</taxon>
        <taxon>Leptospira</taxon>
    </lineage>
</organism>
<proteinExistence type="inferred from homology"/>
<keyword id="KW-0067">ATP-binding</keyword>
<keyword id="KW-0133">Cell shape</keyword>
<keyword id="KW-0961">Cell wall biogenesis/degradation</keyword>
<keyword id="KW-0963">Cytoplasm</keyword>
<keyword id="KW-0436">Ligase</keyword>
<keyword id="KW-0460">Magnesium</keyword>
<keyword id="KW-0464">Manganese</keyword>
<keyword id="KW-0479">Metal-binding</keyword>
<keyword id="KW-0547">Nucleotide-binding</keyword>
<keyword id="KW-0573">Peptidoglycan synthesis</keyword>